<accession>A0Q5E0</accession>
<gene>
    <name evidence="1" type="primary">rsmA</name>
    <name evidence="1" type="synonym">ksgA</name>
    <name type="ordered locus">FTN_0560</name>
</gene>
<evidence type="ECO:0000255" key="1">
    <source>
        <dbReference type="HAMAP-Rule" id="MF_00607"/>
    </source>
</evidence>
<proteinExistence type="inferred from homology"/>
<protein>
    <recommendedName>
        <fullName evidence="1">Ribosomal RNA small subunit methyltransferase A</fullName>
        <ecNumber evidence="1">2.1.1.182</ecNumber>
    </recommendedName>
    <alternativeName>
        <fullName evidence="1">16S rRNA (adenine(1518)-N(6)/adenine(1519)-N(6))-dimethyltransferase</fullName>
    </alternativeName>
    <alternativeName>
        <fullName evidence="1">16S rRNA dimethyladenosine transferase</fullName>
    </alternativeName>
    <alternativeName>
        <fullName evidence="1">16S rRNA dimethylase</fullName>
    </alternativeName>
    <alternativeName>
        <fullName evidence="1">S-adenosylmethionine-6-N', N'-adenosyl(rRNA) dimethyltransferase</fullName>
    </alternativeName>
</protein>
<organism>
    <name type="scientific">Francisella tularensis subsp. novicida (strain U112)</name>
    <dbReference type="NCBI Taxonomy" id="401614"/>
    <lineage>
        <taxon>Bacteria</taxon>
        <taxon>Pseudomonadati</taxon>
        <taxon>Pseudomonadota</taxon>
        <taxon>Gammaproteobacteria</taxon>
        <taxon>Thiotrichales</taxon>
        <taxon>Francisellaceae</taxon>
        <taxon>Francisella</taxon>
    </lineage>
</organism>
<dbReference type="EC" id="2.1.1.182" evidence="1"/>
<dbReference type="EMBL" id="CP000439">
    <property type="protein sequence ID" value="ABK89455.1"/>
    <property type="molecule type" value="Genomic_DNA"/>
</dbReference>
<dbReference type="RefSeq" id="WP_003038594.1">
    <property type="nucleotide sequence ID" value="NC_008601.1"/>
</dbReference>
<dbReference type="SMR" id="A0Q5E0"/>
<dbReference type="KEGG" id="ftn:FTN_0560"/>
<dbReference type="KEGG" id="ftx:AW25_1469"/>
<dbReference type="BioCyc" id="FTUL401614:G1G75-582-MONOMER"/>
<dbReference type="Proteomes" id="UP000000762">
    <property type="component" value="Chromosome"/>
</dbReference>
<dbReference type="GO" id="GO:0005829">
    <property type="term" value="C:cytosol"/>
    <property type="evidence" value="ECO:0007669"/>
    <property type="project" value="TreeGrafter"/>
</dbReference>
<dbReference type="GO" id="GO:0052908">
    <property type="term" value="F:16S rRNA (adenine(1518)-N(6)/adenine(1519)-N(6))-dimethyltransferase activity"/>
    <property type="evidence" value="ECO:0007669"/>
    <property type="project" value="UniProtKB-EC"/>
</dbReference>
<dbReference type="GO" id="GO:0003723">
    <property type="term" value="F:RNA binding"/>
    <property type="evidence" value="ECO:0007669"/>
    <property type="project" value="UniProtKB-KW"/>
</dbReference>
<dbReference type="FunFam" id="1.10.8.100:FF:000001">
    <property type="entry name" value="Ribosomal RNA small subunit methyltransferase A"/>
    <property type="match status" value="1"/>
</dbReference>
<dbReference type="FunFam" id="3.40.50.150:FF:000023">
    <property type="entry name" value="Ribosomal RNA small subunit methyltransferase A"/>
    <property type="match status" value="1"/>
</dbReference>
<dbReference type="Gene3D" id="1.10.8.100">
    <property type="entry name" value="Ribosomal RNA adenine dimethylase-like, domain 2"/>
    <property type="match status" value="1"/>
</dbReference>
<dbReference type="Gene3D" id="3.40.50.150">
    <property type="entry name" value="Vaccinia Virus protein VP39"/>
    <property type="match status" value="1"/>
</dbReference>
<dbReference type="HAMAP" id="MF_00607">
    <property type="entry name" value="16SrRNA_methyltr_A"/>
    <property type="match status" value="1"/>
</dbReference>
<dbReference type="InterPro" id="IPR001737">
    <property type="entry name" value="KsgA/Erm"/>
</dbReference>
<dbReference type="InterPro" id="IPR023165">
    <property type="entry name" value="rRNA_Ade_diMease-like_C"/>
</dbReference>
<dbReference type="InterPro" id="IPR020596">
    <property type="entry name" value="rRNA_Ade_Mease_Trfase_CS"/>
</dbReference>
<dbReference type="InterPro" id="IPR020598">
    <property type="entry name" value="rRNA_Ade_methylase_Trfase_N"/>
</dbReference>
<dbReference type="InterPro" id="IPR011530">
    <property type="entry name" value="rRNA_adenine_dimethylase"/>
</dbReference>
<dbReference type="InterPro" id="IPR029063">
    <property type="entry name" value="SAM-dependent_MTases_sf"/>
</dbReference>
<dbReference type="NCBIfam" id="TIGR00755">
    <property type="entry name" value="ksgA"/>
    <property type="match status" value="1"/>
</dbReference>
<dbReference type="PANTHER" id="PTHR11727">
    <property type="entry name" value="DIMETHYLADENOSINE TRANSFERASE"/>
    <property type="match status" value="1"/>
</dbReference>
<dbReference type="PANTHER" id="PTHR11727:SF7">
    <property type="entry name" value="DIMETHYLADENOSINE TRANSFERASE-RELATED"/>
    <property type="match status" value="1"/>
</dbReference>
<dbReference type="Pfam" id="PF00398">
    <property type="entry name" value="RrnaAD"/>
    <property type="match status" value="1"/>
</dbReference>
<dbReference type="SMART" id="SM00650">
    <property type="entry name" value="rADc"/>
    <property type="match status" value="1"/>
</dbReference>
<dbReference type="SUPFAM" id="SSF53335">
    <property type="entry name" value="S-adenosyl-L-methionine-dependent methyltransferases"/>
    <property type="match status" value="1"/>
</dbReference>
<dbReference type="PROSITE" id="PS01131">
    <property type="entry name" value="RRNA_A_DIMETH"/>
    <property type="match status" value="1"/>
</dbReference>
<dbReference type="PROSITE" id="PS51689">
    <property type="entry name" value="SAM_RNA_A_N6_MT"/>
    <property type="match status" value="1"/>
</dbReference>
<reference key="1">
    <citation type="journal article" date="2007" name="Genome Biol.">
        <title>Comparison of Francisella tularensis genomes reveals evolutionary events associated with the emergence of human pathogenic strains.</title>
        <authorList>
            <person name="Rohmer L."/>
            <person name="Fong C."/>
            <person name="Abmayr S."/>
            <person name="Wasnick M."/>
            <person name="Larson Freeman T.J."/>
            <person name="Radey M."/>
            <person name="Guina T."/>
            <person name="Svensson K."/>
            <person name="Hayden H.S."/>
            <person name="Jacobs M."/>
            <person name="Gallagher L.A."/>
            <person name="Manoil C."/>
            <person name="Ernst R.K."/>
            <person name="Drees B."/>
            <person name="Buckley D."/>
            <person name="Haugen E."/>
            <person name="Bovee D."/>
            <person name="Zhou Y."/>
            <person name="Chang J."/>
            <person name="Levy R."/>
            <person name="Lim R."/>
            <person name="Gillett W."/>
            <person name="Guenthener D."/>
            <person name="Kang A."/>
            <person name="Shaffer S.A."/>
            <person name="Taylor G."/>
            <person name="Chen J."/>
            <person name="Gallis B."/>
            <person name="D'Argenio D.A."/>
            <person name="Forsman M."/>
            <person name="Olson M.V."/>
            <person name="Goodlett D.R."/>
            <person name="Kaul R."/>
            <person name="Miller S.I."/>
            <person name="Brittnacher M.J."/>
        </authorList>
    </citation>
    <scope>NUCLEOTIDE SEQUENCE [LARGE SCALE GENOMIC DNA]</scope>
    <source>
        <strain>U112</strain>
    </source>
</reference>
<keyword id="KW-0963">Cytoplasm</keyword>
<keyword id="KW-0489">Methyltransferase</keyword>
<keyword id="KW-0694">RNA-binding</keyword>
<keyword id="KW-0698">rRNA processing</keyword>
<keyword id="KW-0949">S-adenosyl-L-methionine</keyword>
<keyword id="KW-0808">Transferase</keyword>
<sequence>MQYKTKAKKSLGQNFLQDENIIRKIVQLANIKKHDIVIEIGPGLGALTRYLLSSSNNVSVVEFDASVIDTLIANCQKYGTPHIYNQDFLKFDISSLENSSNQKIKLIGNLPYNISSPILFKVIKDSDKIVDAHFMLQKEVVERIVSLPNSKSYGRLSVILQYHFDCSMILKIPPEVFYPQPKVDSAILRLKPKNSKELLKNYNFFEEIVKQSFAQRRKTLHNNLKSILKERKIDPSTLPVDTNLRAENLSVGDFVSLANFLS</sequence>
<feature type="chain" id="PRO_1000056619" description="Ribosomal RNA small subunit methyltransferase A">
    <location>
        <begin position="1"/>
        <end position="262"/>
    </location>
</feature>
<feature type="binding site" evidence="1">
    <location>
        <position position="14"/>
    </location>
    <ligand>
        <name>S-adenosyl-L-methionine</name>
        <dbReference type="ChEBI" id="CHEBI:59789"/>
    </ligand>
</feature>
<feature type="binding site" evidence="1">
    <location>
        <position position="16"/>
    </location>
    <ligand>
        <name>S-adenosyl-L-methionine</name>
        <dbReference type="ChEBI" id="CHEBI:59789"/>
    </ligand>
</feature>
<feature type="binding site" evidence="1">
    <location>
        <position position="41"/>
    </location>
    <ligand>
        <name>S-adenosyl-L-methionine</name>
        <dbReference type="ChEBI" id="CHEBI:59789"/>
    </ligand>
</feature>
<feature type="binding site" evidence="1">
    <location>
        <position position="62"/>
    </location>
    <ligand>
        <name>S-adenosyl-L-methionine</name>
        <dbReference type="ChEBI" id="CHEBI:59789"/>
    </ligand>
</feature>
<feature type="binding site" evidence="1">
    <location>
        <position position="87"/>
    </location>
    <ligand>
        <name>S-adenosyl-L-methionine</name>
        <dbReference type="ChEBI" id="CHEBI:59789"/>
    </ligand>
</feature>
<feature type="binding site" evidence="1">
    <location>
        <position position="109"/>
    </location>
    <ligand>
        <name>S-adenosyl-L-methionine</name>
        <dbReference type="ChEBI" id="CHEBI:59789"/>
    </ligand>
</feature>
<comment type="function">
    <text evidence="1">Specifically dimethylates two adjacent adenosines (A1518 and A1519) in the loop of a conserved hairpin near the 3'-end of 16S rRNA in the 30S particle. May play a critical role in biogenesis of 30S subunits.</text>
</comment>
<comment type="catalytic activity">
    <reaction evidence="1">
        <text>adenosine(1518)/adenosine(1519) in 16S rRNA + 4 S-adenosyl-L-methionine = N(6)-dimethyladenosine(1518)/N(6)-dimethyladenosine(1519) in 16S rRNA + 4 S-adenosyl-L-homocysteine + 4 H(+)</text>
        <dbReference type="Rhea" id="RHEA:19609"/>
        <dbReference type="Rhea" id="RHEA-COMP:10232"/>
        <dbReference type="Rhea" id="RHEA-COMP:10233"/>
        <dbReference type="ChEBI" id="CHEBI:15378"/>
        <dbReference type="ChEBI" id="CHEBI:57856"/>
        <dbReference type="ChEBI" id="CHEBI:59789"/>
        <dbReference type="ChEBI" id="CHEBI:74411"/>
        <dbReference type="ChEBI" id="CHEBI:74493"/>
        <dbReference type="EC" id="2.1.1.182"/>
    </reaction>
</comment>
<comment type="subcellular location">
    <subcellularLocation>
        <location evidence="1">Cytoplasm</location>
    </subcellularLocation>
</comment>
<comment type="similarity">
    <text evidence="1">Belongs to the class I-like SAM-binding methyltransferase superfamily. rRNA adenine N(6)-methyltransferase family. RsmA subfamily.</text>
</comment>
<name>RSMA_FRATN</name>